<feature type="chain" id="PRO_0000207802" description="Photosystem I reaction center subunit IX">
    <location>
        <begin position="1"/>
        <end position="44"/>
    </location>
</feature>
<feature type="transmembrane region" description="Helical" evidence="1">
    <location>
        <begin position="7"/>
        <end position="27"/>
    </location>
</feature>
<reference key="1">
    <citation type="journal article" date="2004" name="Gene">
        <title>The complete nucleotide sequence of wild rice (Oryza nivara) chloroplast genome: first genome wide comparative sequence analysis of wild and cultivated rice.</title>
        <authorList>
            <person name="Masood M.S."/>
            <person name="Nishikawa T."/>
            <person name="Fukuoka S."/>
            <person name="Njenga P.K."/>
            <person name="Tsudzuki T."/>
            <person name="Kadowaki K."/>
        </authorList>
    </citation>
    <scope>NUCLEOTIDE SEQUENCE [LARGE SCALE GENOMIC DNA]</scope>
    <source>
        <strain evidence="2">cv. SL10</strain>
    </source>
</reference>
<organism>
    <name type="scientific">Oryza nivara</name>
    <name type="common">Indian wild rice</name>
    <name type="synonym">Oryza sativa f. spontanea</name>
    <dbReference type="NCBI Taxonomy" id="4536"/>
    <lineage>
        <taxon>Eukaryota</taxon>
        <taxon>Viridiplantae</taxon>
        <taxon>Streptophyta</taxon>
        <taxon>Embryophyta</taxon>
        <taxon>Tracheophyta</taxon>
        <taxon>Spermatophyta</taxon>
        <taxon>Magnoliopsida</taxon>
        <taxon>Liliopsida</taxon>
        <taxon>Poales</taxon>
        <taxon>Poaceae</taxon>
        <taxon>BOP clade</taxon>
        <taxon>Oryzoideae</taxon>
        <taxon>Oryzeae</taxon>
        <taxon>Oryzinae</taxon>
        <taxon>Oryza</taxon>
    </lineage>
</organism>
<name>PSAJ_ORYNI</name>
<gene>
    <name evidence="1" type="primary">psaJ</name>
</gene>
<sequence length="44" mass="4979">MRDIKTYLSVAPVLSTLWFGALAGLLIEINRLFPDALSFPFFSF</sequence>
<evidence type="ECO:0000255" key="1">
    <source>
        <dbReference type="HAMAP-Rule" id="MF_00522"/>
    </source>
</evidence>
<evidence type="ECO:0000312" key="2">
    <source>
        <dbReference type="Proteomes" id="UP000006591"/>
    </source>
</evidence>
<keyword id="KW-0150">Chloroplast</keyword>
<keyword id="KW-0472">Membrane</keyword>
<keyword id="KW-0602">Photosynthesis</keyword>
<keyword id="KW-0603">Photosystem I</keyword>
<keyword id="KW-0934">Plastid</keyword>
<keyword id="KW-1185">Reference proteome</keyword>
<keyword id="KW-0793">Thylakoid</keyword>
<keyword id="KW-0812">Transmembrane</keyword>
<keyword id="KW-1133">Transmembrane helix</keyword>
<comment type="function">
    <text evidence="1">May help in the organization of the PsaE and PsaF subunits.</text>
</comment>
<comment type="subcellular location">
    <subcellularLocation>
        <location evidence="1">Plastid</location>
        <location evidence="1">Chloroplast thylakoid membrane</location>
        <topology evidence="1">Single-pass membrane protein</topology>
    </subcellularLocation>
</comment>
<comment type="similarity">
    <text evidence="1">Belongs to the PsaJ family.</text>
</comment>
<protein>
    <recommendedName>
        <fullName evidence="1">Photosystem I reaction center subunit IX</fullName>
    </recommendedName>
    <alternativeName>
        <fullName evidence="1">PSI-J</fullName>
    </alternativeName>
</protein>
<proteinExistence type="inferred from homology"/>
<dbReference type="EMBL" id="AP006728">
    <property type="protein sequence ID" value="BAD26799.1"/>
    <property type="molecule type" value="Genomic_DNA"/>
</dbReference>
<dbReference type="RefSeq" id="YP_052770.1">
    <property type="nucleotide sequence ID" value="NC_005973.1"/>
</dbReference>
<dbReference type="SMR" id="Q6ENF3"/>
<dbReference type="STRING" id="4536.Q6ENF3"/>
<dbReference type="GeneID" id="2885938"/>
<dbReference type="Proteomes" id="UP000006591">
    <property type="component" value="Chloroplast"/>
</dbReference>
<dbReference type="GO" id="GO:0009535">
    <property type="term" value="C:chloroplast thylakoid membrane"/>
    <property type="evidence" value="ECO:0007669"/>
    <property type="project" value="UniProtKB-SubCell"/>
</dbReference>
<dbReference type="GO" id="GO:0009522">
    <property type="term" value="C:photosystem I"/>
    <property type="evidence" value="ECO:0007669"/>
    <property type="project" value="UniProtKB-KW"/>
</dbReference>
<dbReference type="GO" id="GO:0009536">
    <property type="term" value="C:plastid"/>
    <property type="evidence" value="ECO:0000305"/>
    <property type="project" value="Gramene"/>
</dbReference>
<dbReference type="GO" id="GO:0015979">
    <property type="term" value="P:photosynthesis"/>
    <property type="evidence" value="ECO:0007669"/>
    <property type="project" value="UniProtKB-UniRule"/>
</dbReference>
<dbReference type="FunFam" id="1.20.5.510:FF:000001">
    <property type="entry name" value="Photosystem I reaction center subunit IX"/>
    <property type="match status" value="1"/>
</dbReference>
<dbReference type="Gene3D" id="1.20.5.510">
    <property type="entry name" value="Single helix bin"/>
    <property type="match status" value="1"/>
</dbReference>
<dbReference type="HAMAP" id="MF_00522">
    <property type="entry name" value="PSI_PsaJ"/>
    <property type="match status" value="1"/>
</dbReference>
<dbReference type="InterPro" id="IPR002615">
    <property type="entry name" value="PSI_PsaJ"/>
</dbReference>
<dbReference type="InterPro" id="IPR036062">
    <property type="entry name" value="PSI_PsaJ_sf"/>
</dbReference>
<dbReference type="PANTHER" id="PTHR36082">
    <property type="match status" value="1"/>
</dbReference>
<dbReference type="PANTHER" id="PTHR36082:SF2">
    <property type="entry name" value="PHOTOSYSTEM I REACTION CENTER SUBUNIT IX"/>
    <property type="match status" value="1"/>
</dbReference>
<dbReference type="Pfam" id="PF01701">
    <property type="entry name" value="PSI_PsaJ"/>
    <property type="match status" value="1"/>
</dbReference>
<dbReference type="SUPFAM" id="SSF81544">
    <property type="entry name" value="Subunit IX of photosystem I reaction centre, PsaJ"/>
    <property type="match status" value="1"/>
</dbReference>
<geneLocation type="chloroplast"/>
<accession>Q6ENF3</accession>